<evidence type="ECO:0000250" key="1"/>
<evidence type="ECO:0000250" key="2">
    <source>
        <dbReference type="UniProtKB" id="O94788"/>
    </source>
</evidence>
<evidence type="ECO:0000250" key="3">
    <source>
        <dbReference type="UniProtKB" id="Q62148"/>
    </source>
</evidence>
<evidence type="ECO:0000250" key="4">
    <source>
        <dbReference type="UniProtKB" id="Q63639"/>
    </source>
</evidence>
<evidence type="ECO:0000255" key="5">
    <source>
        <dbReference type="PROSITE-ProRule" id="PRU10007"/>
    </source>
</evidence>
<evidence type="ECO:0000255" key="6">
    <source>
        <dbReference type="PROSITE-ProRule" id="PRU10008"/>
    </source>
</evidence>
<evidence type="ECO:0000269" key="7">
    <source>
    </source>
</evidence>
<evidence type="ECO:0000303" key="8">
    <source>
    </source>
</evidence>
<evidence type="ECO:0000305" key="9"/>
<evidence type="ECO:0000305" key="10">
    <source>
    </source>
</evidence>
<organism>
    <name type="scientific">Taeniopygia guttata</name>
    <name type="common">Zebra finch</name>
    <name type="synonym">Poephila guttata</name>
    <dbReference type="NCBI Taxonomy" id="59729"/>
    <lineage>
        <taxon>Eukaryota</taxon>
        <taxon>Metazoa</taxon>
        <taxon>Chordata</taxon>
        <taxon>Craniata</taxon>
        <taxon>Vertebrata</taxon>
        <taxon>Euteleostomi</taxon>
        <taxon>Archelosauria</taxon>
        <taxon>Archosauria</taxon>
        <taxon>Dinosauria</taxon>
        <taxon>Saurischia</taxon>
        <taxon>Theropoda</taxon>
        <taxon>Coelurosauria</taxon>
        <taxon>Aves</taxon>
        <taxon>Neognathae</taxon>
        <taxon>Neoaves</taxon>
        <taxon>Telluraves</taxon>
        <taxon>Australaves</taxon>
        <taxon>Passeriformes</taxon>
        <taxon>Passeroidea</taxon>
        <taxon>Estrildidae</taxon>
        <taxon>Estrildinae</taxon>
        <taxon>Taeniopygia</taxon>
    </lineage>
</organism>
<sequence>MTSSKIEMPGEVKADPAALMASLHLLPSPTLNLEIKYTKIFINNEWQNSESGRIFPVYNPATGEQICDIQEADKVDTDKAVRAARLAFSLGSVWRRMDASERGHLLDKLADLVERDRAILATMESLNSGKPFLQAFYVDLQGVIKTLRYYAGWADKIHGMTIPVDGDYFTFTRHEPIGVCGQIIPWNFPLLMFAWKIAPALCCGNTVVIKPAEQTPLSALYMGALIKEAGFPPGVVNILPGFGPIVGAAIASHVGIDKIAFTGSTEVGKLIQEAAGRSNLKRVTLELGGKSPNIIFADADLDYAVEQAHQGVFFNQGQCCTAGSRIYVEESIYEEFVRKSVKRAKRKIVGSPFDPTTEQGPQIDKKQYNKILELIQSGITEGAKLECGGKGLGRKGFFIEPTVFSNVTDDMRIAKEEIFGPVQEILRFKTMDEVIERANNSDFGLVAAVFTNDINKALTVSSAMQAGTVWINCYNALNAQSPFGGSKSGNGREMGECGLREYSEVKTVTIKIPQENS</sequence>
<gene>
    <name type="primary">ALDH1A2</name>
    <name type="synonym">RALDH2</name>
</gene>
<accession>Q9I8W8</accession>
<feature type="chain" id="PRO_0000225600" description="Retinal dehydrogenase 2">
    <location>
        <begin position="1"/>
        <end position="517"/>
    </location>
</feature>
<feature type="active site" description="Proton acceptor" evidence="5 6">
    <location>
        <position position="286"/>
    </location>
</feature>
<feature type="active site" description="Nucleophile" evidence="5 6">
    <location>
        <position position="320"/>
    </location>
</feature>
<feature type="binding site" evidence="2">
    <location>
        <begin position="184"/>
        <end position="186"/>
    </location>
    <ligand>
        <name>NAD(+)</name>
        <dbReference type="ChEBI" id="CHEBI:57540"/>
    </ligand>
</feature>
<feature type="binding site" evidence="2">
    <location>
        <begin position="210"/>
        <end position="213"/>
    </location>
    <ligand>
        <name>NAD(+)</name>
        <dbReference type="ChEBI" id="CHEBI:57540"/>
    </ligand>
</feature>
<feature type="binding site" evidence="2">
    <location>
        <begin position="264"/>
        <end position="266"/>
    </location>
    <ligand>
        <name>NAD(+)</name>
        <dbReference type="ChEBI" id="CHEBI:57540"/>
    </ligand>
</feature>
<feature type="binding site" evidence="2">
    <location>
        <begin position="366"/>
        <end position="370"/>
    </location>
    <ligand>
        <name>NAD(+)</name>
        <dbReference type="ChEBI" id="CHEBI:57540"/>
    </ligand>
</feature>
<feature type="binding site" evidence="2">
    <location>
        <position position="417"/>
    </location>
    <ligand>
        <name>NAD(+)</name>
        <dbReference type="ChEBI" id="CHEBI:57540"/>
    </ligand>
</feature>
<feature type="site" description="Transition state stabilizer" evidence="1">
    <location>
        <position position="187"/>
    </location>
</feature>
<protein>
    <recommendedName>
        <fullName>Retinal dehydrogenase 2</fullName>
        <shortName>RALDH 2</shortName>
        <shortName>RalDH2</shortName>
        <ecNumber evidence="7">1.2.1.36</ecNumber>
    </recommendedName>
    <alternativeName>
        <fullName>Aldehyde dehydrogenase family 1 member A2</fullName>
        <shortName>ALDH1A2</shortName>
    </alternativeName>
    <alternativeName>
        <fullName>Retinaldehyde-specific dehydrogenase type 2</fullName>
        <shortName>RALDH(II)</shortName>
    </alternativeName>
    <alternativeName>
        <fullName evidence="8">zRalDH</fullName>
    </alternativeName>
</protein>
<dbReference type="EC" id="1.2.1.36" evidence="7"/>
<dbReference type="EMBL" id="AF162770">
    <property type="protein sequence ID" value="AAF80471.1"/>
    <property type="molecule type" value="mRNA"/>
</dbReference>
<dbReference type="RefSeq" id="NP_001070153.1">
    <property type="nucleotide sequence ID" value="NM_001076685.1"/>
</dbReference>
<dbReference type="SMR" id="Q9I8W8"/>
<dbReference type="FunCoup" id="Q9I8W8">
    <property type="interactions" value="150"/>
</dbReference>
<dbReference type="STRING" id="59729.ENSTGUP00000031661"/>
<dbReference type="GeneID" id="751771"/>
<dbReference type="KEGG" id="tgu:751771"/>
<dbReference type="CTD" id="8854"/>
<dbReference type="InParanoid" id="Q9I8W8"/>
<dbReference type="OrthoDB" id="310895at2759"/>
<dbReference type="UniPathway" id="UPA00912"/>
<dbReference type="Proteomes" id="UP000007754">
    <property type="component" value="Unplaced"/>
</dbReference>
<dbReference type="GO" id="GO:0005737">
    <property type="term" value="C:cytoplasm"/>
    <property type="evidence" value="ECO:0007669"/>
    <property type="project" value="UniProtKB-SubCell"/>
</dbReference>
<dbReference type="GO" id="GO:0001758">
    <property type="term" value="F:retinal dehydrogenase activity"/>
    <property type="evidence" value="ECO:0000250"/>
    <property type="project" value="UniProtKB"/>
</dbReference>
<dbReference type="GO" id="GO:0051289">
    <property type="term" value="P:protein homotetramerization"/>
    <property type="evidence" value="ECO:0000250"/>
    <property type="project" value="UniProtKB"/>
</dbReference>
<dbReference type="GO" id="GO:0032526">
    <property type="term" value="P:response to retinoic acid"/>
    <property type="evidence" value="ECO:0000250"/>
    <property type="project" value="UniProtKB"/>
</dbReference>
<dbReference type="GO" id="GO:0002138">
    <property type="term" value="P:retinoic acid biosynthetic process"/>
    <property type="evidence" value="ECO:0000250"/>
    <property type="project" value="UniProtKB"/>
</dbReference>
<dbReference type="GO" id="GO:0042573">
    <property type="term" value="P:retinoic acid metabolic process"/>
    <property type="evidence" value="ECO:0000250"/>
    <property type="project" value="UniProtKB"/>
</dbReference>
<dbReference type="GO" id="GO:0042572">
    <property type="term" value="P:retinol metabolic process"/>
    <property type="evidence" value="ECO:0007669"/>
    <property type="project" value="UniProtKB-UniPathway"/>
</dbReference>
<dbReference type="CDD" id="cd07141">
    <property type="entry name" value="ALDH_F1AB_F2_RALDH1"/>
    <property type="match status" value="1"/>
</dbReference>
<dbReference type="FunFam" id="3.40.605.10:FF:000050">
    <property type="entry name" value="Aldehyde dehydrogenase, mitochondrial"/>
    <property type="match status" value="1"/>
</dbReference>
<dbReference type="FunFam" id="3.40.309.10:FF:000001">
    <property type="entry name" value="Mitochondrial aldehyde dehydrogenase 2"/>
    <property type="match status" value="1"/>
</dbReference>
<dbReference type="Gene3D" id="3.40.605.10">
    <property type="entry name" value="Aldehyde Dehydrogenase, Chain A, domain 1"/>
    <property type="match status" value="1"/>
</dbReference>
<dbReference type="Gene3D" id="3.40.309.10">
    <property type="entry name" value="Aldehyde Dehydrogenase, Chain A, domain 2"/>
    <property type="match status" value="1"/>
</dbReference>
<dbReference type="InterPro" id="IPR016161">
    <property type="entry name" value="Ald_DH/histidinol_DH"/>
</dbReference>
<dbReference type="InterPro" id="IPR016163">
    <property type="entry name" value="Ald_DH_C"/>
</dbReference>
<dbReference type="InterPro" id="IPR016160">
    <property type="entry name" value="Ald_DH_CS_CYS"/>
</dbReference>
<dbReference type="InterPro" id="IPR029510">
    <property type="entry name" value="Ald_DH_CS_GLU"/>
</dbReference>
<dbReference type="InterPro" id="IPR016162">
    <property type="entry name" value="Ald_DH_N"/>
</dbReference>
<dbReference type="InterPro" id="IPR015590">
    <property type="entry name" value="Aldehyde_DH_dom"/>
</dbReference>
<dbReference type="PANTHER" id="PTHR11699">
    <property type="entry name" value="ALDEHYDE DEHYDROGENASE-RELATED"/>
    <property type="match status" value="1"/>
</dbReference>
<dbReference type="Pfam" id="PF00171">
    <property type="entry name" value="Aldedh"/>
    <property type="match status" value="1"/>
</dbReference>
<dbReference type="SUPFAM" id="SSF53720">
    <property type="entry name" value="ALDH-like"/>
    <property type="match status" value="1"/>
</dbReference>
<dbReference type="PROSITE" id="PS00070">
    <property type="entry name" value="ALDEHYDE_DEHYDR_CYS"/>
    <property type="match status" value="1"/>
</dbReference>
<dbReference type="PROSITE" id="PS00687">
    <property type="entry name" value="ALDEHYDE_DEHYDR_GLU"/>
    <property type="match status" value="1"/>
</dbReference>
<comment type="function">
    <text evidence="4 7 10">Catalyzes the NAD-dependent oxidation of aldehyde substrates, such as all-trans-retinal and all-trans-13,14-dihydroretinal, to their corresponding carboxylic acids, all-trans-retinoate and all-trans-13,14-dihydroretinoate, respectively (PubMed:10985355). Retinoate signaling is critical for the transcriptional control of many genes, for instance it is crucial for initiation of meiosis in both male and female (Probable). Recognizes retinal as substrate, both in its free form and when bound to cellular retinol-binding protein (By similarity). Lacks activity with benzaldehyde, acetaldehyde and octanal (PubMed:10985355). Displays complete lack of activity with citral (PubMed:10985355). Plays a significant role in the acquisition and production of learned songs (PubMed:10985355).</text>
</comment>
<comment type="catalytic activity">
    <reaction evidence="7">
        <text>retinal + NAD(+) + H2O = retinoate + NADH + 2 H(+)</text>
        <dbReference type="Rhea" id="RHEA:16177"/>
        <dbReference type="ChEBI" id="CHEBI:15035"/>
        <dbReference type="ChEBI" id="CHEBI:15036"/>
        <dbReference type="ChEBI" id="CHEBI:15377"/>
        <dbReference type="ChEBI" id="CHEBI:15378"/>
        <dbReference type="ChEBI" id="CHEBI:57540"/>
        <dbReference type="ChEBI" id="CHEBI:57945"/>
        <dbReference type="EC" id="1.2.1.36"/>
    </reaction>
    <physiologicalReaction direction="left-to-right" evidence="7">
        <dbReference type="Rhea" id="RHEA:16178"/>
    </physiologicalReaction>
</comment>
<comment type="catalytic activity">
    <reaction evidence="7">
        <text>all-trans-retinal + NAD(+) + H2O = all-trans-retinoate + NADH + 2 H(+)</text>
        <dbReference type="Rhea" id="RHEA:42080"/>
        <dbReference type="ChEBI" id="CHEBI:15377"/>
        <dbReference type="ChEBI" id="CHEBI:15378"/>
        <dbReference type="ChEBI" id="CHEBI:17898"/>
        <dbReference type="ChEBI" id="CHEBI:35291"/>
        <dbReference type="ChEBI" id="CHEBI:57540"/>
        <dbReference type="ChEBI" id="CHEBI:57945"/>
        <dbReference type="EC" id="1.2.1.36"/>
    </reaction>
    <physiologicalReaction direction="left-to-right" evidence="7">
        <dbReference type="Rhea" id="RHEA:42081"/>
    </physiologicalReaction>
</comment>
<comment type="catalytic activity">
    <reaction evidence="3">
        <text>all-trans-13,14-dihydroretinal + NAD(+) + H2O = all-trans-13,14-dihydroretinoate + NADH + 2 H(+)</text>
        <dbReference type="Rhea" id="RHEA:75119"/>
        <dbReference type="ChEBI" id="CHEBI:15377"/>
        <dbReference type="ChEBI" id="CHEBI:15378"/>
        <dbReference type="ChEBI" id="CHEBI:57540"/>
        <dbReference type="ChEBI" id="CHEBI:57945"/>
        <dbReference type="ChEBI" id="CHEBI:194182"/>
        <dbReference type="ChEBI" id="CHEBI:194183"/>
    </reaction>
    <physiologicalReaction direction="left-to-right" evidence="3">
        <dbReference type="Rhea" id="RHEA:75120"/>
    </physiologicalReaction>
</comment>
<comment type="biophysicochemical properties">
    <kinetics>
        <KM evidence="7">0.118 uM for retinal</KM>
    </kinetics>
</comment>
<comment type="pathway">
    <text evidence="7">Cofactor metabolism; retinol metabolism.</text>
</comment>
<comment type="subunit">
    <text evidence="2">Homotetramer.</text>
</comment>
<comment type="subcellular location">
    <subcellularLocation>
        <location>Cytoplasm</location>
    </subcellularLocation>
</comment>
<comment type="tissue specificity">
    <text evidence="7">Expressed in the high vocal center (HVC) which integrates auditory and motor activities and constitutes a nodal nucleus on the song system.</text>
</comment>
<comment type="similarity">
    <text evidence="9">Belongs to the aldehyde dehydrogenase family.</text>
</comment>
<name>AL1A2_TAEGU</name>
<keyword id="KW-0963">Cytoplasm</keyword>
<keyword id="KW-0443">Lipid metabolism</keyword>
<keyword id="KW-0520">NAD</keyword>
<keyword id="KW-0560">Oxidoreductase</keyword>
<keyword id="KW-1185">Reference proteome</keyword>
<proteinExistence type="evidence at protein level"/>
<reference key="1">
    <citation type="journal article" date="2000" name="Neuron">
        <title>Site-specific retinoic acid production in the brain of adult songbirds.</title>
        <authorList>
            <person name="Denisenko-Nehrbass N.I."/>
            <person name="Jarvis E."/>
            <person name="Scharff C."/>
            <person name="Nottebohm F."/>
            <person name="Mello C.V."/>
        </authorList>
    </citation>
    <scope>NUCLEOTIDE SEQUENCE [MRNA]</scope>
    <scope>FUNCTION</scope>
    <scope>TISSUE SPECIFICITY</scope>
    <scope>BIOPHYSICOCHEMICAL PROPERTIES</scope>
    <scope>PATHWAY</scope>
</reference>